<reference key="1">
    <citation type="journal article" date="1997" name="Nature">
        <title>The complete genome sequence of the gastric pathogen Helicobacter pylori.</title>
        <authorList>
            <person name="Tomb J.-F."/>
            <person name="White O."/>
            <person name="Kerlavage A.R."/>
            <person name="Clayton R.A."/>
            <person name="Sutton G.G."/>
            <person name="Fleischmann R.D."/>
            <person name="Ketchum K.A."/>
            <person name="Klenk H.-P."/>
            <person name="Gill S.R."/>
            <person name="Dougherty B.A."/>
            <person name="Nelson K.E."/>
            <person name="Quackenbush J."/>
            <person name="Zhou L."/>
            <person name="Kirkness E.F."/>
            <person name="Peterson S.N."/>
            <person name="Loftus B.J."/>
            <person name="Richardson D.L."/>
            <person name="Dodson R.J."/>
            <person name="Khalak H.G."/>
            <person name="Glodek A."/>
            <person name="McKenney K."/>
            <person name="FitzGerald L.M."/>
            <person name="Lee N."/>
            <person name="Adams M.D."/>
            <person name="Hickey E.K."/>
            <person name="Berg D.E."/>
            <person name="Gocayne J.D."/>
            <person name="Utterback T.R."/>
            <person name="Peterson J.D."/>
            <person name="Kelley J.M."/>
            <person name="Cotton M.D."/>
            <person name="Weidman J.F."/>
            <person name="Fujii C."/>
            <person name="Bowman C."/>
            <person name="Watthey L."/>
            <person name="Wallin E."/>
            <person name="Hayes W.S."/>
            <person name="Borodovsky M."/>
            <person name="Karp P.D."/>
            <person name="Smith H.O."/>
            <person name="Fraser C.M."/>
            <person name="Venter J.C."/>
        </authorList>
    </citation>
    <scope>NUCLEOTIDE SEQUENCE [LARGE SCALE GENOMIC DNA]</scope>
    <source>
        <strain>ATCC 700392 / 26695</strain>
    </source>
</reference>
<comment type="function">
    <text evidence="1">Converts 2C-methyl-D-erythritol 2,4-cyclodiphosphate (ME-2,4cPP) into 1-hydroxy-2-methyl-2-(E)-butenyl 4-diphosphate.</text>
</comment>
<comment type="catalytic activity">
    <reaction evidence="1">
        <text>(2E)-4-hydroxy-3-methylbut-2-enyl diphosphate + oxidized [flavodoxin] + H2O + 2 H(+) = 2-C-methyl-D-erythritol 2,4-cyclic diphosphate + reduced [flavodoxin]</text>
        <dbReference type="Rhea" id="RHEA:43604"/>
        <dbReference type="Rhea" id="RHEA-COMP:10622"/>
        <dbReference type="Rhea" id="RHEA-COMP:10623"/>
        <dbReference type="ChEBI" id="CHEBI:15377"/>
        <dbReference type="ChEBI" id="CHEBI:15378"/>
        <dbReference type="ChEBI" id="CHEBI:57618"/>
        <dbReference type="ChEBI" id="CHEBI:58210"/>
        <dbReference type="ChEBI" id="CHEBI:58483"/>
        <dbReference type="ChEBI" id="CHEBI:128753"/>
        <dbReference type="EC" id="1.17.7.3"/>
    </reaction>
</comment>
<comment type="cofactor">
    <cofactor evidence="1">
        <name>[4Fe-4S] cluster</name>
        <dbReference type="ChEBI" id="CHEBI:49883"/>
    </cofactor>
    <text evidence="1">Binds 1 [4Fe-4S] cluster.</text>
</comment>
<comment type="pathway">
    <text evidence="1">Isoprenoid biosynthesis; isopentenyl diphosphate biosynthesis via DXP pathway; isopentenyl diphosphate from 1-deoxy-D-xylulose 5-phosphate: step 5/6.</text>
</comment>
<comment type="similarity">
    <text evidence="1">Belongs to the IspG family.</text>
</comment>
<proteinExistence type="inferred from homology"/>
<organism>
    <name type="scientific">Helicobacter pylori (strain ATCC 700392 / 26695)</name>
    <name type="common">Campylobacter pylori</name>
    <dbReference type="NCBI Taxonomy" id="85962"/>
    <lineage>
        <taxon>Bacteria</taxon>
        <taxon>Pseudomonadati</taxon>
        <taxon>Campylobacterota</taxon>
        <taxon>Epsilonproteobacteria</taxon>
        <taxon>Campylobacterales</taxon>
        <taxon>Helicobacteraceae</taxon>
        <taxon>Helicobacter</taxon>
    </lineage>
</organism>
<evidence type="ECO:0000255" key="1">
    <source>
        <dbReference type="HAMAP-Rule" id="MF_00159"/>
    </source>
</evidence>
<keyword id="KW-0004">4Fe-4S</keyword>
<keyword id="KW-0408">Iron</keyword>
<keyword id="KW-0411">Iron-sulfur</keyword>
<keyword id="KW-0414">Isoprene biosynthesis</keyword>
<keyword id="KW-0479">Metal-binding</keyword>
<keyword id="KW-0560">Oxidoreductase</keyword>
<keyword id="KW-1185">Reference proteome</keyword>
<accession>O25342</accession>
<name>ISPG_HELPY</name>
<feature type="chain" id="PRO_0000190587" description="4-hydroxy-3-methylbut-2-en-1-yl diphosphate synthase (flavodoxin)">
    <location>
        <begin position="1"/>
        <end position="359"/>
    </location>
</feature>
<feature type="binding site" evidence="1">
    <location>
        <position position="264"/>
    </location>
    <ligand>
        <name>[4Fe-4S] cluster</name>
        <dbReference type="ChEBI" id="CHEBI:49883"/>
    </ligand>
</feature>
<feature type="binding site" evidence="1">
    <location>
        <position position="267"/>
    </location>
    <ligand>
        <name>[4Fe-4S] cluster</name>
        <dbReference type="ChEBI" id="CHEBI:49883"/>
    </ligand>
</feature>
<feature type="binding site" evidence="1">
    <location>
        <position position="299"/>
    </location>
    <ligand>
        <name>[4Fe-4S] cluster</name>
        <dbReference type="ChEBI" id="CHEBI:49883"/>
    </ligand>
</feature>
<feature type="binding site" evidence="1">
    <location>
        <position position="306"/>
    </location>
    <ligand>
        <name>[4Fe-4S] cluster</name>
        <dbReference type="ChEBI" id="CHEBI:49883"/>
    </ligand>
</feature>
<dbReference type="EC" id="1.17.7.3" evidence="1"/>
<dbReference type="EMBL" id="AE000511">
    <property type="protein sequence ID" value="AAD07695.1"/>
    <property type="molecule type" value="Genomic_DNA"/>
</dbReference>
<dbReference type="PIR" id="A64598">
    <property type="entry name" value="A64598"/>
</dbReference>
<dbReference type="RefSeq" id="NP_207419.1">
    <property type="nucleotide sequence ID" value="NC_000915.1"/>
</dbReference>
<dbReference type="RefSeq" id="WP_000892489.1">
    <property type="nucleotide sequence ID" value="NC_018939.1"/>
</dbReference>
<dbReference type="SMR" id="O25342"/>
<dbReference type="DIP" id="DIP-3696N"/>
<dbReference type="FunCoup" id="O25342">
    <property type="interactions" value="241"/>
</dbReference>
<dbReference type="IntAct" id="O25342">
    <property type="interactions" value="1"/>
</dbReference>
<dbReference type="MINT" id="O25342"/>
<dbReference type="STRING" id="85962.HP_0625"/>
<dbReference type="PaxDb" id="85962-C694_03235"/>
<dbReference type="DNASU" id="899294"/>
<dbReference type="EnsemblBacteria" id="AAD07695">
    <property type="protein sequence ID" value="AAD07695"/>
    <property type="gene ID" value="HP_0625"/>
</dbReference>
<dbReference type="KEGG" id="heo:C694_03235"/>
<dbReference type="KEGG" id="hpy:HP_0625"/>
<dbReference type="PATRIC" id="fig|85962.47.peg.675"/>
<dbReference type="eggNOG" id="COG0821">
    <property type="taxonomic scope" value="Bacteria"/>
</dbReference>
<dbReference type="InParanoid" id="O25342"/>
<dbReference type="OrthoDB" id="9803214at2"/>
<dbReference type="PhylomeDB" id="O25342"/>
<dbReference type="UniPathway" id="UPA00056">
    <property type="reaction ID" value="UER00096"/>
</dbReference>
<dbReference type="Proteomes" id="UP000000429">
    <property type="component" value="Chromosome"/>
</dbReference>
<dbReference type="GO" id="GO:0051539">
    <property type="term" value="F:4 iron, 4 sulfur cluster binding"/>
    <property type="evidence" value="ECO:0007669"/>
    <property type="project" value="UniProtKB-UniRule"/>
</dbReference>
<dbReference type="GO" id="GO:0046429">
    <property type="term" value="F:4-hydroxy-3-methylbut-2-en-1-yl diphosphate synthase activity (ferredoxin)"/>
    <property type="evidence" value="ECO:0000318"/>
    <property type="project" value="GO_Central"/>
</dbReference>
<dbReference type="GO" id="GO:0141197">
    <property type="term" value="F:4-hydroxy-3-methylbut-2-enyl-diphosphate synthase activity (flavodoxin)"/>
    <property type="evidence" value="ECO:0007669"/>
    <property type="project" value="UniProtKB-EC"/>
</dbReference>
<dbReference type="GO" id="GO:0005506">
    <property type="term" value="F:iron ion binding"/>
    <property type="evidence" value="ECO:0007669"/>
    <property type="project" value="InterPro"/>
</dbReference>
<dbReference type="GO" id="GO:0019288">
    <property type="term" value="P:isopentenyl diphosphate biosynthetic process, methylerythritol 4-phosphate pathway"/>
    <property type="evidence" value="ECO:0000318"/>
    <property type="project" value="GO_Central"/>
</dbReference>
<dbReference type="GO" id="GO:0016114">
    <property type="term" value="P:terpenoid biosynthetic process"/>
    <property type="evidence" value="ECO:0007669"/>
    <property type="project" value="InterPro"/>
</dbReference>
<dbReference type="FunFam" id="3.20.20.20:FF:000001">
    <property type="entry name" value="4-hydroxy-3-methylbut-2-en-1-yl diphosphate synthase (flavodoxin)"/>
    <property type="match status" value="1"/>
</dbReference>
<dbReference type="FunFam" id="3.30.413.10:FF:000015">
    <property type="entry name" value="4-hydroxy-3-methylbut-2-en-1-yl diphosphate synthase (flavodoxin)"/>
    <property type="match status" value="1"/>
</dbReference>
<dbReference type="Gene3D" id="3.20.20.20">
    <property type="entry name" value="Dihydropteroate synthase-like"/>
    <property type="match status" value="1"/>
</dbReference>
<dbReference type="Gene3D" id="3.30.413.10">
    <property type="entry name" value="Sulfite Reductase Hemoprotein, domain 1"/>
    <property type="match status" value="1"/>
</dbReference>
<dbReference type="HAMAP" id="MF_00159">
    <property type="entry name" value="IspG"/>
    <property type="match status" value="1"/>
</dbReference>
<dbReference type="InterPro" id="IPR011005">
    <property type="entry name" value="Dihydropteroate_synth-like_sf"/>
</dbReference>
<dbReference type="InterPro" id="IPR036849">
    <property type="entry name" value="Enolase-like_C_sf"/>
</dbReference>
<dbReference type="InterPro" id="IPR016425">
    <property type="entry name" value="IspG_bac"/>
</dbReference>
<dbReference type="InterPro" id="IPR004588">
    <property type="entry name" value="IspG_bac-typ"/>
</dbReference>
<dbReference type="InterPro" id="IPR045854">
    <property type="entry name" value="NO2/SO3_Rdtase_4Fe4S_sf"/>
</dbReference>
<dbReference type="NCBIfam" id="TIGR00612">
    <property type="entry name" value="ispG_gcpE"/>
    <property type="match status" value="1"/>
</dbReference>
<dbReference type="NCBIfam" id="NF001540">
    <property type="entry name" value="PRK00366.1"/>
    <property type="match status" value="1"/>
</dbReference>
<dbReference type="PANTHER" id="PTHR30454">
    <property type="entry name" value="4-HYDROXY-3-METHYLBUT-2-EN-1-YL DIPHOSPHATE SYNTHASE"/>
    <property type="match status" value="1"/>
</dbReference>
<dbReference type="PANTHER" id="PTHR30454:SF0">
    <property type="entry name" value="4-HYDROXY-3-METHYLBUT-2-EN-1-YL DIPHOSPHATE SYNTHASE (FERREDOXIN), CHLOROPLASTIC"/>
    <property type="match status" value="1"/>
</dbReference>
<dbReference type="Pfam" id="PF04551">
    <property type="entry name" value="GcpE"/>
    <property type="match status" value="1"/>
</dbReference>
<dbReference type="PIRSF" id="PIRSF004640">
    <property type="entry name" value="IspG"/>
    <property type="match status" value="1"/>
</dbReference>
<dbReference type="SUPFAM" id="SSF51604">
    <property type="entry name" value="Enolase C-terminal domain-like"/>
    <property type="match status" value="1"/>
</dbReference>
<dbReference type="SUPFAM" id="SSF56014">
    <property type="entry name" value="Nitrite and sulphite reductase 4Fe-4S domain-like"/>
    <property type="match status" value="1"/>
</dbReference>
<gene>
    <name evidence="1" type="primary">ispG</name>
    <name type="ordered locus">HP_0625</name>
</gene>
<sequence length="359" mass="39279">MLENRVKTKQIFIGGVAIGGDAPISTQSMTFSKTADIESTKNQIDRLKLAGADLVRVAVSNEKDALALKELKKVSPLPLIADIHFHYKFALIAAQSVDAIRINPGNIGSKEKIKAVVDACKEKNIPIRIGVNAGSLEKQFDQKYGPTPKGMVESALYNAKLLEDLDFTNFKISLKASDVIRTIEAYRMLRPLVIYPFHLGVTEAGNLFSSSIKSAMALGGLLMEGIGDTMRVSITGELENEIKVARAILRHSGRLKEGINWISCPTCGRIEANLVDMAIKVEKRLSHIKTPLDISVMGCVVNALGEAKHADMAIAFGNRSGLIIKEGKVIHKLAEKDLFETFVIEVENLAKEREKSLKD</sequence>
<protein>
    <recommendedName>
        <fullName evidence="1">4-hydroxy-3-methylbut-2-en-1-yl diphosphate synthase (flavodoxin)</fullName>
        <ecNumber evidence="1">1.17.7.3</ecNumber>
    </recommendedName>
    <alternativeName>
        <fullName evidence="1">1-hydroxy-2-methyl-2-(E)-butenyl 4-diphosphate synthase</fullName>
    </alternativeName>
</protein>